<protein>
    <recommendedName>
        <fullName evidence="1">Rhomboid protease GlpG</fullName>
        <ecNumber evidence="1">3.4.21.105</ecNumber>
    </recommendedName>
    <alternativeName>
        <fullName evidence="1">Intramembrane serine protease</fullName>
    </alternativeName>
</protein>
<reference key="1">
    <citation type="journal article" date="2008" name="J. Bacteriol.">
        <title>The pangenome structure of Escherichia coli: comparative genomic analysis of E. coli commensal and pathogenic isolates.</title>
        <authorList>
            <person name="Rasko D.A."/>
            <person name="Rosovitz M.J."/>
            <person name="Myers G.S.A."/>
            <person name="Mongodin E.F."/>
            <person name="Fricke W.F."/>
            <person name="Gajer P."/>
            <person name="Crabtree J."/>
            <person name="Sebaihia M."/>
            <person name="Thomson N.R."/>
            <person name="Chaudhuri R."/>
            <person name="Henderson I.R."/>
            <person name="Sperandio V."/>
            <person name="Ravel J."/>
        </authorList>
    </citation>
    <scope>NUCLEOTIDE SEQUENCE [LARGE SCALE GENOMIC DNA]</scope>
    <source>
        <strain>HS</strain>
    </source>
</reference>
<dbReference type="EC" id="3.4.21.105" evidence="1"/>
<dbReference type="EMBL" id="CP000802">
    <property type="protein sequence ID" value="ABV07836.1"/>
    <property type="molecule type" value="Genomic_DNA"/>
</dbReference>
<dbReference type="RefSeq" id="WP_000928723.1">
    <property type="nucleotide sequence ID" value="NC_009800.1"/>
</dbReference>
<dbReference type="BMRB" id="A8A5N2"/>
<dbReference type="SMR" id="A8A5N2"/>
<dbReference type="MEROPS" id="S54.016"/>
<dbReference type="GeneID" id="86862178"/>
<dbReference type="KEGG" id="ecx:EcHS_A3621"/>
<dbReference type="HOGENOM" id="CLU_058989_0_0_6"/>
<dbReference type="GO" id="GO:0005886">
    <property type="term" value="C:plasma membrane"/>
    <property type="evidence" value="ECO:0007669"/>
    <property type="project" value="UniProtKB-SubCell"/>
</dbReference>
<dbReference type="GO" id="GO:0004252">
    <property type="term" value="F:serine-type endopeptidase activity"/>
    <property type="evidence" value="ECO:0007669"/>
    <property type="project" value="UniProtKB-UniRule"/>
</dbReference>
<dbReference type="GO" id="GO:0006508">
    <property type="term" value="P:proteolysis"/>
    <property type="evidence" value="ECO:0007669"/>
    <property type="project" value="UniProtKB-UniRule"/>
</dbReference>
<dbReference type="FunFam" id="1.20.1540.10:FF:000003">
    <property type="entry name" value="Rhomboid protease GlpG"/>
    <property type="match status" value="1"/>
</dbReference>
<dbReference type="FunFam" id="3.30.70.2350:FF:000001">
    <property type="entry name" value="Rhomboid protease GlpG"/>
    <property type="match status" value="1"/>
</dbReference>
<dbReference type="Gene3D" id="3.30.70.2350">
    <property type="match status" value="1"/>
</dbReference>
<dbReference type="Gene3D" id="1.20.1540.10">
    <property type="entry name" value="Rhomboid-like"/>
    <property type="match status" value="1"/>
</dbReference>
<dbReference type="HAMAP" id="MF_01594">
    <property type="entry name" value="Rhomboid_GlpG"/>
    <property type="match status" value="1"/>
</dbReference>
<dbReference type="InterPro" id="IPR038236">
    <property type="entry name" value="GlpG_N_sf"/>
</dbReference>
<dbReference type="InterPro" id="IPR022732">
    <property type="entry name" value="Peptidase_S54_GlpG_N"/>
</dbReference>
<dbReference type="InterPro" id="IPR022764">
    <property type="entry name" value="Peptidase_S54_rhomboid_dom"/>
</dbReference>
<dbReference type="InterPro" id="IPR035952">
    <property type="entry name" value="Rhomboid-like_sf"/>
</dbReference>
<dbReference type="InterPro" id="IPR023662">
    <property type="entry name" value="Rhomboid_protease_GlpG"/>
</dbReference>
<dbReference type="NCBIfam" id="NF008155">
    <property type="entry name" value="PRK10907.1"/>
    <property type="match status" value="1"/>
</dbReference>
<dbReference type="NCBIfam" id="TIGR04239">
    <property type="entry name" value="rhombo_GlpG"/>
    <property type="match status" value="1"/>
</dbReference>
<dbReference type="PANTHER" id="PTHR43066:SF26">
    <property type="entry name" value="RHOMBOID PROTEASE GLPG"/>
    <property type="match status" value="1"/>
</dbReference>
<dbReference type="PANTHER" id="PTHR43066">
    <property type="entry name" value="RHOMBOID-RELATED PROTEIN"/>
    <property type="match status" value="1"/>
</dbReference>
<dbReference type="Pfam" id="PF01694">
    <property type="entry name" value="Rhomboid"/>
    <property type="match status" value="1"/>
</dbReference>
<dbReference type="Pfam" id="PF12122">
    <property type="entry name" value="Rhomboid_N"/>
    <property type="match status" value="1"/>
</dbReference>
<dbReference type="SUPFAM" id="SSF144091">
    <property type="entry name" value="Rhomboid-like"/>
    <property type="match status" value="1"/>
</dbReference>
<gene>
    <name evidence="1" type="primary">glpG</name>
    <name type="ordered locus">EcHS_A3621</name>
</gene>
<sequence length="276" mass="31307">MLMITSFANPRVAQAFVDYMATQGVILTIQQHNQSDVWLADESQAERVRAELARFLENPADPRYLAASWQAGHTGSGLHYRRYPFFAALRERAGPVTWVMMIACVVVFIAMQILGDQEVMLWLAWPFDPTLKFEFWRYFTHALMHFSLMHILFNLLWWWYLGGAVEKRLGSGKLIVITLISALLSGYVQQKFSGPWFGGLSGVVYALMGYVWLRGERDPQSGIYLQRGLIIFALIWIVAGWFDLFGMSMANGAHIAGLAVGLAMAFVDSLNARKRK</sequence>
<proteinExistence type="inferred from homology"/>
<comment type="function">
    <text evidence="1">Rhomboid-type serine protease that catalyzes intramembrane proteolysis.</text>
</comment>
<comment type="catalytic activity">
    <reaction evidence="1">
        <text>Cleaves type-1 transmembrane domains using a catalytic dyad composed of serine and histidine that are contributed by different transmembrane domains.</text>
        <dbReference type="EC" id="3.4.21.105"/>
    </reaction>
</comment>
<comment type="subcellular location">
    <subcellularLocation>
        <location evidence="1">Cell inner membrane</location>
        <topology evidence="1">Multi-pass membrane protein</topology>
    </subcellularLocation>
</comment>
<comment type="similarity">
    <text evidence="1">Belongs to the peptidase S54 family.</text>
</comment>
<evidence type="ECO:0000255" key="1">
    <source>
        <dbReference type="HAMAP-Rule" id="MF_01594"/>
    </source>
</evidence>
<keyword id="KW-0997">Cell inner membrane</keyword>
<keyword id="KW-1003">Cell membrane</keyword>
<keyword id="KW-0378">Hydrolase</keyword>
<keyword id="KW-0472">Membrane</keyword>
<keyword id="KW-0645">Protease</keyword>
<keyword id="KW-0720">Serine protease</keyword>
<keyword id="KW-0812">Transmembrane</keyword>
<keyword id="KW-1133">Transmembrane helix</keyword>
<name>GLPG_ECOHS</name>
<feature type="chain" id="PRO_0000321685" description="Rhomboid protease GlpG">
    <location>
        <begin position="1"/>
        <end position="276"/>
    </location>
</feature>
<feature type="transmembrane region" description="Helical" evidence="1">
    <location>
        <begin position="94"/>
        <end position="114"/>
    </location>
</feature>
<feature type="transmembrane region" description="Helical" evidence="1">
    <location>
        <begin position="142"/>
        <end position="162"/>
    </location>
</feature>
<feature type="transmembrane region" description="Helical" evidence="1">
    <location>
        <begin position="169"/>
        <end position="189"/>
    </location>
</feature>
<feature type="transmembrane region" description="Helical" evidence="1">
    <location>
        <begin position="192"/>
        <end position="212"/>
    </location>
</feature>
<feature type="transmembrane region" description="Helical" evidence="1">
    <location>
        <begin position="229"/>
        <end position="249"/>
    </location>
</feature>
<feature type="transmembrane region" description="Helical" evidence="1">
    <location>
        <begin position="250"/>
        <end position="270"/>
    </location>
</feature>
<feature type="active site" description="Nucleophile" evidence="1">
    <location>
        <position position="201"/>
    </location>
</feature>
<feature type="active site" evidence="1">
    <location>
        <position position="254"/>
    </location>
</feature>
<accession>A8A5N2</accession>
<organism>
    <name type="scientific">Escherichia coli O9:H4 (strain HS)</name>
    <dbReference type="NCBI Taxonomy" id="331112"/>
    <lineage>
        <taxon>Bacteria</taxon>
        <taxon>Pseudomonadati</taxon>
        <taxon>Pseudomonadota</taxon>
        <taxon>Gammaproteobacteria</taxon>
        <taxon>Enterobacterales</taxon>
        <taxon>Enterobacteriaceae</taxon>
        <taxon>Escherichia</taxon>
    </lineage>
</organism>